<accession>Q8CP51</accession>
<gene>
    <name evidence="1" type="primary">proC</name>
    <name type="ordered locus">SE_1186</name>
</gene>
<feature type="chain" id="PRO_0000187304" description="Pyrroline-5-carboxylate reductase">
    <location>
        <begin position="1"/>
        <end position="271"/>
    </location>
</feature>
<keyword id="KW-0028">Amino-acid biosynthesis</keyword>
<keyword id="KW-0963">Cytoplasm</keyword>
<keyword id="KW-0521">NADP</keyword>
<keyword id="KW-0560">Oxidoreductase</keyword>
<keyword id="KW-0641">Proline biosynthesis</keyword>
<reference key="1">
    <citation type="journal article" date="2003" name="Mol. Microbiol.">
        <title>Genome-based analysis of virulence genes in a non-biofilm-forming Staphylococcus epidermidis strain (ATCC 12228).</title>
        <authorList>
            <person name="Zhang Y.-Q."/>
            <person name="Ren S.-X."/>
            <person name="Li H.-L."/>
            <person name="Wang Y.-X."/>
            <person name="Fu G."/>
            <person name="Yang J."/>
            <person name="Qin Z.-Q."/>
            <person name="Miao Y.-G."/>
            <person name="Wang W.-Y."/>
            <person name="Chen R.-S."/>
            <person name="Shen Y."/>
            <person name="Chen Z."/>
            <person name="Yuan Z.-H."/>
            <person name="Zhao G.-P."/>
            <person name="Qu D."/>
            <person name="Danchin A."/>
            <person name="Wen Y.-M."/>
        </authorList>
    </citation>
    <scope>NUCLEOTIDE SEQUENCE [LARGE SCALE GENOMIC DNA]</scope>
    <source>
        <strain>ATCC 12228 / FDA PCI 1200</strain>
    </source>
</reference>
<protein>
    <recommendedName>
        <fullName evidence="1">Pyrroline-5-carboxylate reductase</fullName>
        <shortName evidence="1">P5C reductase</shortName>
        <shortName evidence="1">P5CR</shortName>
        <ecNumber evidence="1">1.5.1.2</ecNumber>
    </recommendedName>
    <alternativeName>
        <fullName evidence="1">PCA reductase</fullName>
    </alternativeName>
</protein>
<dbReference type="EC" id="1.5.1.2" evidence="1"/>
<dbReference type="EMBL" id="AE015929">
    <property type="protein sequence ID" value="AAO04785.1"/>
    <property type="molecule type" value="Genomic_DNA"/>
</dbReference>
<dbReference type="RefSeq" id="NP_764741.1">
    <property type="nucleotide sequence ID" value="NC_004461.1"/>
</dbReference>
<dbReference type="RefSeq" id="WP_001831307.1">
    <property type="nucleotide sequence ID" value="NZ_WBME01000006.1"/>
</dbReference>
<dbReference type="SMR" id="Q8CP51"/>
<dbReference type="GeneID" id="50018695"/>
<dbReference type="KEGG" id="sep:SE_1186"/>
<dbReference type="PATRIC" id="fig|176280.10.peg.1157"/>
<dbReference type="eggNOG" id="COG0345">
    <property type="taxonomic scope" value="Bacteria"/>
</dbReference>
<dbReference type="HOGENOM" id="CLU_042344_0_1_9"/>
<dbReference type="OrthoDB" id="9805754at2"/>
<dbReference type="UniPathway" id="UPA00098">
    <property type="reaction ID" value="UER00361"/>
</dbReference>
<dbReference type="Proteomes" id="UP000001411">
    <property type="component" value="Chromosome"/>
</dbReference>
<dbReference type="GO" id="GO:0005737">
    <property type="term" value="C:cytoplasm"/>
    <property type="evidence" value="ECO:0007669"/>
    <property type="project" value="UniProtKB-SubCell"/>
</dbReference>
<dbReference type="GO" id="GO:0004735">
    <property type="term" value="F:pyrroline-5-carboxylate reductase activity"/>
    <property type="evidence" value="ECO:0007669"/>
    <property type="project" value="UniProtKB-UniRule"/>
</dbReference>
<dbReference type="GO" id="GO:0055129">
    <property type="term" value="P:L-proline biosynthetic process"/>
    <property type="evidence" value="ECO:0007669"/>
    <property type="project" value="UniProtKB-UniRule"/>
</dbReference>
<dbReference type="FunFam" id="1.10.3730.10:FF:000001">
    <property type="entry name" value="Pyrroline-5-carboxylate reductase"/>
    <property type="match status" value="1"/>
</dbReference>
<dbReference type="Gene3D" id="3.40.50.720">
    <property type="entry name" value="NAD(P)-binding Rossmann-like Domain"/>
    <property type="match status" value="1"/>
</dbReference>
<dbReference type="Gene3D" id="1.10.3730.10">
    <property type="entry name" value="ProC C-terminal domain-like"/>
    <property type="match status" value="1"/>
</dbReference>
<dbReference type="HAMAP" id="MF_01925">
    <property type="entry name" value="P5C_reductase"/>
    <property type="match status" value="1"/>
</dbReference>
<dbReference type="InterPro" id="IPR008927">
    <property type="entry name" value="6-PGluconate_DH-like_C_sf"/>
</dbReference>
<dbReference type="InterPro" id="IPR036291">
    <property type="entry name" value="NAD(P)-bd_dom_sf"/>
</dbReference>
<dbReference type="InterPro" id="IPR028939">
    <property type="entry name" value="P5C_Rdtase_cat_N"/>
</dbReference>
<dbReference type="InterPro" id="IPR029036">
    <property type="entry name" value="P5CR_dimer"/>
</dbReference>
<dbReference type="InterPro" id="IPR000304">
    <property type="entry name" value="Pyrroline-COOH_reductase"/>
</dbReference>
<dbReference type="NCBIfam" id="TIGR00112">
    <property type="entry name" value="proC"/>
    <property type="match status" value="1"/>
</dbReference>
<dbReference type="PANTHER" id="PTHR11645">
    <property type="entry name" value="PYRROLINE-5-CARBOXYLATE REDUCTASE"/>
    <property type="match status" value="1"/>
</dbReference>
<dbReference type="PANTHER" id="PTHR11645:SF0">
    <property type="entry name" value="PYRROLINE-5-CARBOXYLATE REDUCTASE 3"/>
    <property type="match status" value="1"/>
</dbReference>
<dbReference type="Pfam" id="PF03807">
    <property type="entry name" value="F420_oxidored"/>
    <property type="match status" value="1"/>
</dbReference>
<dbReference type="Pfam" id="PF14748">
    <property type="entry name" value="P5CR_dimer"/>
    <property type="match status" value="1"/>
</dbReference>
<dbReference type="PIRSF" id="PIRSF000193">
    <property type="entry name" value="Pyrrol-5-carb_rd"/>
    <property type="match status" value="1"/>
</dbReference>
<dbReference type="SUPFAM" id="SSF48179">
    <property type="entry name" value="6-phosphogluconate dehydrogenase C-terminal domain-like"/>
    <property type="match status" value="1"/>
</dbReference>
<dbReference type="SUPFAM" id="SSF51735">
    <property type="entry name" value="NAD(P)-binding Rossmann-fold domains"/>
    <property type="match status" value="1"/>
</dbReference>
<evidence type="ECO:0000255" key="1">
    <source>
        <dbReference type="HAMAP-Rule" id="MF_01925"/>
    </source>
</evidence>
<proteinExistence type="inferred from homology"/>
<comment type="function">
    <text evidence="1">Catalyzes the reduction of 1-pyrroline-5-carboxylate (PCA) to L-proline.</text>
</comment>
<comment type="catalytic activity">
    <reaction evidence="1">
        <text>L-proline + NADP(+) = (S)-1-pyrroline-5-carboxylate + NADPH + 2 H(+)</text>
        <dbReference type="Rhea" id="RHEA:14109"/>
        <dbReference type="ChEBI" id="CHEBI:15378"/>
        <dbReference type="ChEBI" id="CHEBI:17388"/>
        <dbReference type="ChEBI" id="CHEBI:57783"/>
        <dbReference type="ChEBI" id="CHEBI:58349"/>
        <dbReference type="ChEBI" id="CHEBI:60039"/>
        <dbReference type="EC" id="1.5.1.2"/>
    </reaction>
</comment>
<comment type="catalytic activity">
    <reaction evidence="1">
        <text>L-proline + NAD(+) = (S)-1-pyrroline-5-carboxylate + NADH + 2 H(+)</text>
        <dbReference type="Rhea" id="RHEA:14105"/>
        <dbReference type="ChEBI" id="CHEBI:15378"/>
        <dbReference type="ChEBI" id="CHEBI:17388"/>
        <dbReference type="ChEBI" id="CHEBI:57540"/>
        <dbReference type="ChEBI" id="CHEBI:57945"/>
        <dbReference type="ChEBI" id="CHEBI:60039"/>
        <dbReference type="EC" id="1.5.1.2"/>
    </reaction>
</comment>
<comment type="pathway">
    <text evidence="1">Amino-acid biosynthesis; L-proline biosynthesis; L-proline from L-glutamate 5-semialdehyde: step 1/1.</text>
</comment>
<comment type="subcellular location">
    <subcellularLocation>
        <location evidence="1">Cytoplasm</location>
    </subcellularLocation>
</comment>
<comment type="similarity">
    <text evidence="1">Belongs to the pyrroline-5-carboxylate reductase family.</text>
</comment>
<sequence>MKLVFYGAGNMAQAIFTGIINSNNLNANDIYLTNKSNEQALKSFAEKLGVNYSYDDEALLKDADYVFLGTKPHDFENLANRIREHITNDNRFISIMAGLSIDYIRQQLNTNNPLARIMPNTNAQVGHSVTGISFSNNFDPKSKNEVDELINAFGSVIEVSEEHLHQVTAITGSGPAFLYHVFEQYVKAGTELGLERNQVEESIRNLIIGTSKMIERSDLSMSQLRKNITSKGGTTQAGLDALSQYDIVSMFEDCLGAAVNRSMELSHKEDE</sequence>
<organism>
    <name type="scientific">Staphylococcus epidermidis (strain ATCC 12228 / FDA PCI 1200)</name>
    <dbReference type="NCBI Taxonomy" id="176280"/>
    <lineage>
        <taxon>Bacteria</taxon>
        <taxon>Bacillati</taxon>
        <taxon>Bacillota</taxon>
        <taxon>Bacilli</taxon>
        <taxon>Bacillales</taxon>
        <taxon>Staphylococcaceae</taxon>
        <taxon>Staphylococcus</taxon>
    </lineage>
</organism>
<name>P5CR_STAES</name>